<dbReference type="EC" id="4.2.1.10" evidence="1"/>
<dbReference type="EMBL" id="CP017624">
    <property type="protein sequence ID" value="AOW27724.1"/>
    <property type="molecule type" value="Genomic_DNA"/>
</dbReference>
<dbReference type="RefSeq" id="XP_714872.2">
    <property type="nucleotide sequence ID" value="XM_709779.2"/>
</dbReference>
<dbReference type="PDB" id="3KIP">
    <property type="method" value="X-ray"/>
    <property type="resolution" value="2.95 A"/>
    <property type="chains" value="A/B/C/D/E/F/G/H/I/J/K/L/M/N/O/P/Q/R/S/T/U/V/W/X=2-146"/>
</dbReference>
<dbReference type="PDBsum" id="3KIP"/>
<dbReference type="SMR" id="Q59Z17"/>
<dbReference type="STRING" id="237561.Q59Z17"/>
<dbReference type="EnsemblFungi" id="C2_07260C_A-T">
    <property type="protein sequence ID" value="C2_07260C_A-T-p1"/>
    <property type="gene ID" value="C2_07260C_A"/>
</dbReference>
<dbReference type="GeneID" id="3643488"/>
<dbReference type="KEGG" id="cal:CAALFM_C207260CA"/>
<dbReference type="CGD" id="CAL0000191356">
    <property type="gene designation" value="DQD1"/>
</dbReference>
<dbReference type="VEuPathDB" id="FungiDB:C2_07260C_A"/>
<dbReference type="eggNOG" id="ENOG502S1A9">
    <property type="taxonomic scope" value="Eukaryota"/>
</dbReference>
<dbReference type="HOGENOM" id="CLU_090968_1_0_1"/>
<dbReference type="InParanoid" id="Q59Z17"/>
<dbReference type="OrthoDB" id="8191625at2759"/>
<dbReference type="UniPathway" id="UPA00088">
    <property type="reaction ID" value="UER00178"/>
</dbReference>
<dbReference type="EvolutionaryTrace" id="Q59Z17"/>
<dbReference type="PRO" id="PR:Q59Z17"/>
<dbReference type="Proteomes" id="UP000000559">
    <property type="component" value="Chromosome 2"/>
</dbReference>
<dbReference type="GO" id="GO:0003855">
    <property type="term" value="F:3-dehydroquinate dehydratase activity"/>
    <property type="evidence" value="ECO:0000318"/>
    <property type="project" value="GO_Central"/>
</dbReference>
<dbReference type="GO" id="GO:0046279">
    <property type="term" value="P:3,4-dihydroxybenzoate biosynthetic process"/>
    <property type="evidence" value="ECO:0007669"/>
    <property type="project" value="UniProtKB-UniRule"/>
</dbReference>
<dbReference type="GO" id="GO:0019631">
    <property type="term" value="P:quinate catabolic process"/>
    <property type="evidence" value="ECO:0000318"/>
    <property type="project" value="GO_Central"/>
</dbReference>
<dbReference type="CDD" id="cd00466">
    <property type="entry name" value="DHQase_II"/>
    <property type="match status" value="1"/>
</dbReference>
<dbReference type="Gene3D" id="3.40.50.9100">
    <property type="entry name" value="Dehydroquinase, class II"/>
    <property type="match status" value="1"/>
</dbReference>
<dbReference type="HAMAP" id="MF_00169">
    <property type="entry name" value="AroQ"/>
    <property type="match status" value="1"/>
</dbReference>
<dbReference type="InterPro" id="IPR001874">
    <property type="entry name" value="DHquinase_II"/>
</dbReference>
<dbReference type="InterPro" id="IPR018509">
    <property type="entry name" value="DHquinase_II_CS"/>
</dbReference>
<dbReference type="InterPro" id="IPR036441">
    <property type="entry name" value="DHquinase_II_sf"/>
</dbReference>
<dbReference type="NCBIfam" id="TIGR01088">
    <property type="entry name" value="aroQ"/>
    <property type="match status" value="1"/>
</dbReference>
<dbReference type="NCBIfam" id="NF003804">
    <property type="entry name" value="PRK05395.1-1"/>
    <property type="match status" value="1"/>
</dbReference>
<dbReference type="NCBIfam" id="NF003805">
    <property type="entry name" value="PRK05395.1-2"/>
    <property type="match status" value="1"/>
</dbReference>
<dbReference type="NCBIfam" id="NF003806">
    <property type="entry name" value="PRK05395.1-3"/>
    <property type="match status" value="1"/>
</dbReference>
<dbReference type="NCBIfam" id="NF003807">
    <property type="entry name" value="PRK05395.1-4"/>
    <property type="match status" value="1"/>
</dbReference>
<dbReference type="PANTHER" id="PTHR21272">
    <property type="entry name" value="CATABOLIC 3-DEHYDROQUINASE"/>
    <property type="match status" value="1"/>
</dbReference>
<dbReference type="PANTHER" id="PTHR21272:SF3">
    <property type="entry name" value="CATABOLIC 3-DEHYDROQUINASE"/>
    <property type="match status" value="1"/>
</dbReference>
<dbReference type="Pfam" id="PF01220">
    <property type="entry name" value="DHquinase_II"/>
    <property type="match status" value="1"/>
</dbReference>
<dbReference type="PIRSF" id="PIRSF001399">
    <property type="entry name" value="DHquinase_II"/>
    <property type="match status" value="1"/>
</dbReference>
<dbReference type="SUPFAM" id="SSF52304">
    <property type="entry name" value="Type II 3-dehydroquinate dehydratase"/>
    <property type="match status" value="1"/>
</dbReference>
<dbReference type="PROSITE" id="PS01029">
    <property type="entry name" value="DEHYDROQUINASE_II"/>
    <property type="match status" value="1"/>
</dbReference>
<organism>
    <name type="scientific">Candida albicans (strain SC5314 / ATCC MYA-2876)</name>
    <name type="common">Yeast</name>
    <dbReference type="NCBI Taxonomy" id="237561"/>
    <lineage>
        <taxon>Eukaryota</taxon>
        <taxon>Fungi</taxon>
        <taxon>Dikarya</taxon>
        <taxon>Ascomycota</taxon>
        <taxon>Saccharomycotina</taxon>
        <taxon>Pichiomycetes</taxon>
        <taxon>Debaryomycetaceae</taxon>
        <taxon>Candida/Lodderomyces clade</taxon>
        <taxon>Candida</taxon>
    </lineage>
</organism>
<name>3DHQ_CANAL</name>
<sequence>MVKKVLLINGPNLNLLGTREPEKYGTTSLSDIEQAAIEQAKLKNNDSEVLVFQSNTEGFIIDRIHEAKRQGVGFVVINAGAYTHTSVGIRDALLGTAIPFIEVHITNVHQREPFRHQSYLSDKAVAVICGLGVYGYTAAIEYALNY</sequence>
<proteinExistence type="evidence at protein level"/>
<feature type="chain" id="PRO_0000402361" description="Catabolic 3-dehydroquinase">
    <location>
        <begin position="1"/>
        <end position="146"/>
    </location>
</feature>
<feature type="active site" description="Proton acceptor" evidence="1">
    <location>
        <position position="24"/>
    </location>
</feature>
<feature type="active site" description="Proton donor" evidence="1">
    <location>
        <position position="104"/>
    </location>
</feature>
<feature type="binding site" evidence="1">
    <location>
        <position position="78"/>
    </location>
    <ligand>
        <name>substrate</name>
    </ligand>
</feature>
<feature type="binding site" evidence="1">
    <location>
        <position position="84"/>
    </location>
    <ligand>
        <name>substrate</name>
    </ligand>
</feature>
<feature type="binding site" evidence="1">
    <location>
        <position position="91"/>
    </location>
    <ligand>
        <name>substrate</name>
    </ligand>
</feature>
<feature type="binding site" evidence="1">
    <location>
        <begin position="105"/>
        <end position="106"/>
    </location>
    <ligand>
        <name>substrate</name>
    </ligand>
</feature>
<feature type="binding site" evidence="1">
    <location>
        <position position="115"/>
    </location>
    <ligand>
        <name>substrate</name>
    </ligand>
</feature>
<feature type="site" description="Transition state stabilizer" evidence="1">
    <location>
        <position position="19"/>
    </location>
</feature>
<feature type="strand" evidence="3">
    <location>
        <begin position="4"/>
        <end position="9"/>
    </location>
</feature>
<feature type="helix" evidence="3">
    <location>
        <begin position="13"/>
        <end position="15"/>
    </location>
</feature>
<feature type="helix" evidence="3">
    <location>
        <begin position="29"/>
        <end position="42"/>
    </location>
</feature>
<feature type="strand" evidence="3">
    <location>
        <begin position="48"/>
        <end position="53"/>
    </location>
</feature>
<feature type="helix" evidence="3">
    <location>
        <begin position="57"/>
        <end position="69"/>
    </location>
</feature>
<feature type="strand" evidence="3">
    <location>
        <begin position="74"/>
        <end position="78"/>
    </location>
</feature>
<feature type="helix" evidence="3">
    <location>
        <begin position="80"/>
        <end position="84"/>
    </location>
</feature>
<feature type="helix" evidence="3">
    <location>
        <begin position="87"/>
        <end position="95"/>
    </location>
</feature>
<feature type="strand" evidence="3">
    <location>
        <begin position="100"/>
        <end position="106"/>
    </location>
</feature>
<feature type="helix" evidence="3">
    <location>
        <begin position="108"/>
        <end position="110"/>
    </location>
</feature>
<feature type="helix" evidence="3">
    <location>
        <begin position="113"/>
        <end position="116"/>
    </location>
</feature>
<feature type="helix" evidence="3">
    <location>
        <begin position="121"/>
        <end position="123"/>
    </location>
</feature>
<feature type="strand" evidence="3">
    <location>
        <begin position="124"/>
        <end position="131"/>
    </location>
</feature>
<feature type="helix" evidence="3">
    <location>
        <begin position="134"/>
        <end position="143"/>
    </location>
</feature>
<evidence type="ECO:0000255" key="1">
    <source>
        <dbReference type="HAMAP-Rule" id="MF_03136"/>
    </source>
</evidence>
<evidence type="ECO:0000269" key="2">
    <source>
    </source>
</evidence>
<evidence type="ECO:0007829" key="3">
    <source>
        <dbReference type="PDB" id="3KIP"/>
    </source>
</evidence>
<gene>
    <name evidence="1" type="primary">DQD1</name>
    <name type="synonym">DHQ99</name>
    <name type="ordered locus">CAALFM_C207260CA</name>
    <name type="ORF">CaO19.2283</name>
    <name type="ORF">CaO19.9823</name>
</gene>
<accession>Q59Z17</accession>
<accession>A0A1D8PHW2</accession>
<accession>Q59Z79</accession>
<reference key="1">
    <citation type="journal article" date="2004" name="Proc. Natl. Acad. Sci. U.S.A.">
        <title>The diploid genome sequence of Candida albicans.</title>
        <authorList>
            <person name="Jones T."/>
            <person name="Federspiel N.A."/>
            <person name="Chibana H."/>
            <person name="Dungan J."/>
            <person name="Kalman S."/>
            <person name="Magee B.B."/>
            <person name="Newport G."/>
            <person name="Thorstenson Y.R."/>
            <person name="Agabian N."/>
            <person name="Magee P.T."/>
            <person name="Davis R.W."/>
            <person name="Scherer S."/>
        </authorList>
    </citation>
    <scope>NUCLEOTIDE SEQUENCE [LARGE SCALE GENOMIC DNA]</scope>
    <source>
        <strain>SC5314 / ATCC MYA-2876</strain>
    </source>
</reference>
<reference key="2">
    <citation type="journal article" date="2007" name="Genome Biol.">
        <title>Assembly of the Candida albicans genome into sixteen supercontigs aligned on the eight chromosomes.</title>
        <authorList>
            <person name="van het Hoog M."/>
            <person name="Rast T.J."/>
            <person name="Martchenko M."/>
            <person name="Grindle S."/>
            <person name="Dignard D."/>
            <person name="Hogues H."/>
            <person name="Cuomo C."/>
            <person name="Berriman M."/>
            <person name="Scherer S."/>
            <person name="Magee B.B."/>
            <person name="Whiteway M."/>
            <person name="Chibana H."/>
            <person name="Nantel A."/>
            <person name="Magee P.T."/>
        </authorList>
    </citation>
    <scope>GENOME REANNOTATION</scope>
    <source>
        <strain>SC5314 / ATCC MYA-2876</strain>
    </source>
</reference>
<reference key="3">
    <citation type="journal article" date="2013" name="Genome Biol.">
        <title>Assembly of a phased diploid Candida albicans genome facilitates allele-specific measurements and provides a simple model for repeat and indel structure.</title>
        <authorList>
            <person name="Muzzey D."/>
            <person name="Schwartz K."/>
            <person name="Weissman J.S."/>
            <person name="Sherlock G."/>
        </authorList>
    </citation>
    <scope>NUCLEOTIDE SEQUENCE [LARGE SCALE GENOMIC DNA]</scope>
    <scope>GENOME REANNOTATION</scope>
    <source>
        <strain>SC5314 / ATCC MYA-2876</strain>
    </source>
</reference>
<reference key="4">
    <citation type="journal article" date="2010" name="Acta Crystallogr. D">
        <title>Macromolecular crystal data phased by negative-stained electron-microscopy reconstructions.</title>
        <authorList>
            <person name="Trapani S."/>
            <person name="Schoehn G."/>
            <person name="Navaza J."/>
            <person name="Abergel C."/>
        </authorList>
    </citation>
    <scope>X-RAY CRYSTALLOGRAPHY (2.95 ANGSTROMS) OF 2-146</scope>
    <scope>SUBUNIT</scope>
</reference>
<keyword id="KW-0002">3D-structure</keyword>
<keyword id="KW-0456">Lyase</keyword>
<keyword id="KW-0672">Quinate metabolism</keyword>
<keyword id="KW-1185">Reference proteome</keyword>
<protein>
    <recommendedName>
        <fullName evidence="1">Catabolic 3-dehydroquinase</fullName>
        <shortName evidence="1">cDHQase</shortName>
        <ecNumber evidence="1">4.2.1.10</ecNumber>
    </recommendedName>
    <alternativeName>
        <fullName evidence="1">3-dehydroquinate dehydratase</fullName>
    </alternativeName>
</protein>
<comment type="function">
    <text evidence="1">Is involved in the catabolism of quinate. Allows the utilization of quinate as carbon source via the beta-ketoadipate pathway.</text>
</comment>
<comment type="catalytic activity">
    <reaction evidence="1">
        <text>3-dehydroquinate = 3-dehydroshikimate + H2O</text>
        <dbReference type="Rhea" id="RHEA:21096"/>
        <dbReference type="ChEBI" id="CHEBI:15377"/>
        <dbReference type="ChEBI" id="CHEBI:16630"/>
        <dbReference type="ChEBI" id="CHEBI:32364"/>
        <dbReference type="EC" id="4.2.1.10"/>
    </reaction>
</comment>
<comment type="pathway">
    <text evidence="1">Aromatic compound metabolism; 3,4-dihydroxybenzoate biosynthesis; 3,4-dihydroxybenzoate from 3-dehydroquinate: step 1/2.</text>
</comment>
<comment type="subunit">
    <text evidence="1 2">Homododecamer. Adopts a ring-like structure, composed of an arrangement of two hexameric rings stacked on top of one another.</text>
</comment>
<comment type="similarity">
    <text evidence="1">Belongs to the type-II 3-dehydroquinase family.</text>
</comment>